<organism>
    <name type="scientific">Rhizobium leguminosarum bv. trifolii (strain WSM2304)</name>
    <dbReference type="NCBI Taxonomy" id="395492"/>
    <lineage>
        <taxon>Bacteria</taxon>
        <taxon>Pseudomonadati</taxon>
        <taxon>Pseudomonadota</taxon>
        <taxon>Alphaproteobacteria</taxon>
        <taxon>Hyphomicrobiales</taxon>
        <taxon>Rhizobiaceae</taxon>
        <taxon>Rhizobium/Agrobacterium group</taxon>
        <taxon>Rhizobium</taxon>
    </lineage>
</organism>
<name>SYE_RHILW</name>
<gene>
    <name evidence="1" type="primary">gltX</name>
    <name type="ordered locus">Rleg2_3419</name>
</gene>
<sequence>MTTSGVRVRIAPSPTGEPHVGTAYIALFNYLFAKKHGGEFILRIEDTDATRSTPEFETKVLDALKWCGLEWKEGPDIGGPYGPYRQSDRKPMYQPYAEELLDKGHAFRCFCTPARLEQMREAQRAAGKPPKYDGLCLSLTAEEVTSRMAAGETTVIRMKIPAEGSCDFTDGVYGDVSIPWDSVDMQVLIKADGMPTYHMANVIDDHLMKITHVARGEEWLASVPKHILLYRYFGWDQPVFMHLSLMRNADKSKLSKRKNPTSISYYSALGYIPEALMNFLGLFFIQIAEGEELLTMEELSAKFDPENLSKAGAIFDIQKLDWLNGRWIREKLSEEEFQARVLAWAMENDRLKAGLRLSQTRISKLGELPDLAGFLLKSDLGLQPSDFAKIKSPPEEILEILNTVQPDLEKILEWNVETIEAELRAIADRMGKKLKVVVSPLFVAVSGSSRSLPLFDSMAILGRSVVRQRLKLAAQAVAALVGSK</sequence>
<keyword id="KW-0030">Aminoacyl-tRNA synthetase</keyword>
<keyword id="KW-0067">ATP-binding</keyword>
<keyword id="KW-0963">Cytoplasm</keyword>
<keyword id="KW-0436">Ligase</keyword>
<keyword id="KW-0547">Nucleotide-binding</keyword>
<keyword id="KW-0648">Protein biosynthesis</keyword>
<keyword id="KW-1185">Reference proteome</keyword>
<feature type="chain" id="PRO_0000367742" description="Glutamate--tRNA ligase">
    <location>
        <begin position="1"/>
        <end position="484"/>
    </location>
</feature>
<feature type="short sequence motif" description="'HIGH' region" evidence="1">
    <location>
        <begin position="12"/>
        <end position="22"/>
    </location>
</feature>
<feature type="short sequence motif" description="'KMSKS' region" evidence="1">
    <location>
        <begin position="253"/>
        <end position="257"/>
    </location>
</feature>
<feature type="binding site" evidence="1">
    <location>
        <position position="256"/>
    </location>
    <ligand>
        <name>ATP</name>
        <dbReference type="ChEBI" id="CHEBI:30616"/>
    </ligand>
</feature>
<dbReference type="EC" id="6.1.1.17" evidence="1"/>
<dbReference type="EMBL" id="CP001191">
    <property type="protein sequence ID" value="ACI56686.1"/>
    <property type="molecule type" value="Genomic_DNA"/>
</dbReference>
<dbReference type="RefSeq" id="WP_012559001.1">
    <property type="nucleotide sequence ID" value="NC_011369.1"/>
</dbReference>
<dbReference type="SMR" id="B5ZQW4"/>
<dbReference type="STRING" id="395492.Rleg2_3419"/>
<dbReference type="KEGG" id="rlt:Rleg2_3419"/>
<dbReference type="eggNOG" id="COG0008">
    <property type="taxonomic scope" value="Bacteria"/>
</dbReference>
<dbReference type="HOGENOM" id="CLU_015768_6_3_5"/>
<dbReference type="Proteomes" id="UP000008330">
    <property type="component" value="Chromosome"/>
</dbReference>
<dbReference type="GO" id="GO:0005829">
    <property type="term" value="C:cytosol"/>
    <property type="evidence" value="ECO:0007669"/>
    <property type="project" value="TreeGrafter"/>
</dbReference>
<dbReference type="GO" id="GO:0005524">
    <property type="term" value="F:ATP binding"/>
    <property type="evidence" value="ECO:0007669"/>
    <property type="project" value="UniProtKB-UniRule"/>
</dbReference>
<dbReference type="GO" id="GO:0004818">
    <property type="term" value="F:glutamate-tRNA ligase activity"/>
    <property type="evidence" value="ECO:0007669"/>
    <property type="project" value="UniProtKB-UniRule"/>
</dbReference>
<dbReference type="GO" id="GO:0000049">
    <property type="term" value="F:tRNA binding"/>
    <property type="evidence" value="ECO:0007669"/>
    <property type="project" value="InterPro"/>
</dbReference>
<dbReference type="GO" id="GO:0008270">
    <property type="term" value="F:zinc ion binding"/>
    <property type="evidence" value="ECO:0007669"/>
    <property type="project" value="InterPro"/>
</dbReference>
<dbReference type="GO" id="GO:0006424">
    <property type="term" value="P:glutamyl-tRNA aminoacylation"/>
    <property type="evidence" value="ECO:0007669"/>
    <property type="project" value="UniProtKB-UniRule"/>
</dbReference>
<dbReference type="CDD" id="cd00808">
    <property type="entry name" value="GluRS_core"/>
    <property type="match status" value="1"/>
</dbReference>
<dbReference type="FunFam" id="3.40.50.620:FF:000045">
    <property type="entry name" value="Glutamate--tRNA ligase, mitochondrial"/>
    <property type="match status" value="1"/>
</dbReference>
<dbReference type="Gene3D" id="1.10.10.350">
    <property type="match status" value="1"/>
</dbReference>
<dbReference type="Gene3D" id="3.40.50.620">
    <property type="entry name" value="HUPs"/>
    <property type="match status" value="1"/>
</dbReference>
<dbReference type="HAMAP" id="MF_00022">
    <property type="entry name" value="Glu_tRNA_synth_type1"/>
    <property type="match status" value="1"/>
</dbReference>
<dbReference type="InterPro" id="IPR045462">
    <property type="entry name" value="aa-tRNA-synth_I_cd-bd"/>
</dbReference>
<dbReference type="InterPro" id="IPR020751">
    <property type="entry name" value="aa-tRNA-synth_I_codon-bd_sub2"/>
</dbReference>
<dbReference type="InterPro" id="IPR001412">
    <property type="entry name" value="aa-tRNA-synth_I_CS"/>
</dbReference>
<dbReference type="InterPro" id="IPR008925">
    <property type="entry name" value="aa_tRNA-synth_I_cd-bd_sf"/>
</dbReference>
<dbReference type="InterPro" id="IPR004527">
    <property type="entry name" value="Glu-tRNA-ligase_bac/mito"/>
</dbReference>
<dbReference type="InterPro" id="IPR000924">
    <property type="entry name" value="Glu/Gln-tRNA-synth"/>
</dbReference>
<dbReference type="InterPro" id="IPR020058">
    <property type="entry name" value="Glu/Gln-tRNA-synth_Ib_cat-dom"/>
</dbReference>
<dbReference type="InterPro" id="IPR049940">
    <property type="entry name" value="GluQ/Sye"/>
</dbReference>
<dbReference type="InterPro" id="IPR033910">
    <property type="entry name" value="GluRS_core"/>
</dbReference>
<dbReference type="InterPro" id="IPR014729">
    <property type="entry name" value="Rossmann-like_a/b/a_fold"/>
</dbReference>
<dbReference type="NCBIfam" id="TIGR00464">
    <property type="entry name" value="gltX_bact"/>
    <property type="match status" value="1"/>
</dbReference>
<dbReference type="PANTHER" id="PTHR43311">
    <property type="entry name" value="GLUTAMATE--TRNA LIGASE"/>
    <property type="match status" value="1"/>
</dbReference>
<dbReference type="PANTHER" id="PTHR43311:SF2">
    <property type="entry name" value="GLUTAMATE--TRNA LIGASE, MITOCHONDRIAL-RELATED"/>
    <property type="match status" value="1"/>
</dbReference>
<dbReference type="Pfam" id="PF19269">
    <property type="entry name" value="Anticodon_2"/>
    <property type="match status" value="1"/>
</dbReference>
<dbReference type="Pfam" id="PF00749">
    <property type="entry name" value="tRNA-synt_1c"/>
    <property type="match status" value="1"/>
</dbReference>
<dbReference type="PRINTS" id="PR00987">
    <property type="entry name" value="TRNASYNTHGLU"/>
</dbReference>
<dbReference type="SUPFAM" id="SSF48163">
    <property type="entry name" value="An anticodon-binding domain of class I aminoacyl-tRNA synthetases"/>
    <property type="match status" value="1"/>
</dbReference>
<dbReference type="SUPFAM" id="SSF52374">
    <property type="entry name" value="Nucleotidylyl transferase"/>
    <property type="match status" value="1"/>
</dbReference>
<dbReference type="PROSITE" id="PS00178">
    <property type="entry name" value="AA_TRNA_LIGASE_I"/>
    <property type="match status" value="1"/>
</dbReference>
<accession>B5ZQW4</accession>
<comment type="function">
    <text evidence="1">Catalyzes the attachment of glutamate to tRNA(Glu) in a two-step reaction: glutamate is first activated by ATP to form Glu-AMP and then transferred to the acceptor end of tRNA(Glu).</text>
</comment>
<comment type="catalytic activity">
    <reaction evidence="1">
        <text>tRNA(Glu) + L-glutamate + ATP = L-glutamyl-tRNA(Glu) + AMP + diphosphate</text>
        <dbReference type="Rhea" id="RHEA:23540"/>
        <dbReference type="Rhea" id="RHEA-COMP:9663"/>
        <dbReference type="Rhea" id="RHEA-COMP:9680"/>
        <dbReference type="ChEBI" id="CHEBI:29985"/>
        <dbReference type="ChEBI" id="CHEBI:30616"/>
        <dbReference type="ChEBI" id="CHEBI:33019"/>
        <dbReference type="ChEBI" id="CHEBI:78442"/>
        <dbReference type="ChEBI" id="CHEBI:78520"/>
        <dbReference type="ChEBI" id="CHEBI:456215"/>
        <dbReference type="EC" id="6.1.1.17"/>
    </reaction>
</comment>
<comment type="subunit">
    <text evidence="1">Monomer.</text>
</comment>
<comment type="subcellular location">
    <subcellularLocation>
        <location evidence="1">Cytoplasm</location>
    </subcellularLocation>
</comment>
<comment type="similarity">
    <text evidence="1">Belongs to the class-I aminoacyl-tRNA synthetase family. Glutamate--tRNA ligase type 1 subfamily.</text>
</comment>
<proteinExistence type="inferred from homology"/>
<evidence type="ECO:0000255" key="1">
    <source>
        <dbReference type="HAMAP-Rule" id="MF_00022"/>
    </source>
</evidence>
<reference key="1">
    <citation type="journal article" date="2010" name="Stand. Genomic Sci.">
        <title>Complete genome sequence of Rhizobium leguminosarum bv trifolii strain WSM2304, an effective microsymbiont of the South American clover Trifolium polymorphum.</title>
        <authorList>
            <person name="Reeve W."/>
            <person name="O'Hara G."/>
            <person name="Chain P."/>
            <person name="Ardley J."/>
            <person name="Brau L."/>
            <person name="Nandesena K."/>
            <person name="Tiwari R."/>
            <person name="Malfatti S."/>
            <person name="Kiss H."/>
            <person name="Lapidus A."/>
            <person name="Copeland A."/>
            <person name="Nolan M."/>
            <person name="Land M."/>
            <person name="Ivanova N."/>
            <person name="Mavromatis K."/>
            <person name="Markowitz V."/>
            <person name="Kyrpides N."/>
            <person name="Melino V."/>
            <person name="Denton M."/>
            <person name="Yates R."/>
            <person name="Howieson J."/>
        </authorList>
    </citation>
    <scope>NUCLEOTIDE SEQUENCE [LARGE SCALE GENOMIC DNA]</scope>
    <source>
        <strain>WSM2304</strain>
    </source>
</reference>
<protein>
    <recommendedName>
        <fullName evidence="1">Glutamate--tRNA ligase</fullName>
        <ecNumber evidence="1">6.1.1.17</ecNumber>
    </recommendedName>
    <alternativeName>
        <fullName evidence="1">Glutamyl-tRNA synthetase</fullName>
        <shortName evidence="1">GluRS</shortName>
    </alternativeName>
</protein>